<protein>
    <recommendedName>
        <fullName>Formin-2</fullName>
    </recommendedName>
</protein>
<feature type="chain" id="PRO_0000194888" description="Formin-2">
    <location>
        <begin position="1"/>
        <end position="1722"/>
    </location>
</feature>
<feature type="domain" description="FH1">
    <location>
        <begin position="758"/>
        <end position="1268"/>
    </location>
</feature>
<feature type="domain" description="FH2" evidence="3">
    <location>
        <begin position="1283"/>
        <end position="1698"/>
    </location>
</feature>
<feature type="region of interest" description="Disordered" evidence="4">
    <location>
        <begin position="1"/>
        <end position="104"/>
    </location>
</feature>
<feature type="region of interest" description="Disordered" evidence="4">
    <location>
        <begin position="126"/>
        <end position="189"/>
    </location>
</feature>
<feature type="region of interest" description="Disordered" evidence="4">
    <location>
        <begin position="207"/>
        <end position="475"/>
    </location>
</feature>
<feature type="region of interest" description="Disordered" evidence="4">
    <location>
        <begin position="612"/>
        <end position="663"/>
    </location>
</feature>
<feature type="region of interest" description="Disordered" evidence="4">
    <location>
        <begin position="797"/>
        <end position="1252"/>
    </location>
</feature>
<feature type="region of interest" description="Important for interaction with SPIRE1">
    <location>
        <begin position="1715"/>
        <end position="1722"/>
    </location>
</feature>
<feature type="coiled-coil region" evidence="2">
    <location>
        <begin position="193"/>
        <end position="231"/>
    </location>
</feature>
<feature type="coiled-coil region" evidence="2">
    <location>
        <begin position="670"/>
        <end position="706"/>
    </location>
</feature>
<feature type="coiled-coil region" evidence="2">
    <location>
        <begin position="1567"/>
        <end position="1597"/>
    </location>
</feature>
<feature type="coiled-coil region" evidence="2">
    <location>
        <begin position="1677"/>
        <end position="1699"/>
    </location>
</feature>
<feature type="compositionally biased region" description="Basic and acidic residues" evidence="4">
    <location>
        <begin position="1"/>
        <end position="17"/>
    </location>
</feature>
<feature type="compositionally biased region" description="Basic and acidic residues" evidence="4">
    <location>
        <begin position="27"/>
        <end position="36"/>
    </location>
</feature>
<feature type="compositionally biased region" description="Gly residues" evidence="4">
    <location>
        <begin position="51"/>
        <end position="60"/>
    </location>
</feature>
<feature type="compositionally biased region" description="Basic and acidic residues" evidence="4">
    <location>
        <begin position="61"/>
        <end position="70"/>
    </location>
</feature>
<feature type="compositionally biased region" description="Polar residues" evidence="4">
    <location>
        <begin position="172"/>
        <end position="182"/>
    </location>
</feature>
<feature type="compositionally biased region" description="Low complexity" evidence="4">
    <location>
        <begin position="207"/>
        <end position="227"/>
    </location>
</feature>
<feature type="compositionally biased region" description="Low complexity" evidence="4">
    <location>
        <begin position="322"/>
        <end position="342"/>
    </location>
</feature>
<feature type="compositionally biased region" description="Acidic residues" evidence="4">
    <location>
        <begin position="344"/>
        <end position="355"/>
    </location>
</feature>
<feature type="compositionally biased region" description="Low complexity" evidence="4">
    <location>
        <begin position="389"/>
        <end position="404"/>
    </location>
</feature>
<feature type="compositionally biased region" description="Low complexity" evidence="4">
    <location>
        <begin position="427"/>
        <end position="441"/>
    </location>
</feature>
<feature type="compositionally biased region" description="Basic and acidic residues" evidence="4">
    <location>
        <begin position="631"/>
        <end position="640"/>
    </location>
</feature>
<feature type="compositionally biased region" description="Basic and acidic residues" evidence="4">
    <location>
        <begin position="653"/>
        <end position="663"/>
    </location>
</feature>
<feature type="compositionally biased region" description="Polar residues" evidence="4">
    <location>
        <begin position="821"/>
        <end position="838"/>
    </location>
</feature>
<feature type="compositionally biased region" description="Polar residues" evidence="4">
    <location>
        <begin position="845"/>
        <end position="855"/>
    </location>
</feature>
<feature type="compositionally biased region" description="Pro residues" evidence="4">
    <location>
        <begin position="897"/>
        <end position="1246"/>
    </location>
</feature>
<feature type="modified residue" description="Phosphoserine" evidence="1">
    <location>
        <position position="93"/>
    </location>
</feature>
<feature type="modified residue" description="Phosphoserine" evidence="1">
    <location>
        <position position="482"/>
    </location>
</feature>
<feature type="modified residue" description="Phosphoserine" evidence="1">
    <location>
        <position position="516"/>
    </location>
</feature>
<feature type="splice variant" id="VSP_056095" description="In isoform 2." evidence="14">
    <location>
        <begin position="2"/>
        <end position="1405"/>
    </location>
</feature>
<feature type="sequence variant" id="VAR_059290" description="In dbSNP:rs12732924." evidence="13">
    <original>R</original>
    <variation>G</variation>
    <location>
        <position position="1148"/>
    </location>
</feature>
<feature type="sequence variant" id="VAR_049094" description="In dbSNP:rs12732924.">
    <original>R</original>
    <variation>G</variation>
    <location>
        <position position="1291"/>
    </location>
</feature>
<feature type="sequence variant" id="VAR_033932" description="In dbSNP:rs3795677." evidence="13">
    <original>R</original>
    <variation>H</variation>
    <location>
        <position position="1468"/>
    </location>
</feature>
<feature type="mutagenesis site" description="Blocks accumulation in the nucleus in response to DNA damage." evidence="12">
    <original>KRR</original>
    <variation>AAA</variation>
    <location>
        <begin position="444"/>
        <end position="446"/>
    </location>
</feature>
<feature type="mutagenesis site" description="Abolishes interaction with SPIRE1." evidence="8">
    <original>K</original>
    <variation>A</variation>
    <variation>E</variation>
    <location>
        <position position="1715"/>
    </location>
</feature>
<feature type="mutagenesis site" description="Strongly reduces interaction with SPIRE1." evidence="8">
    <original>K</original>
    <variation>A</variation>
    <location>
        <position position="1717"/>
    </location>
</feature>
<feature type="mutagenesis site" description="Strongly reduces interaction with SPIRE1." evidence="8">
    <original>K</original>
    <variation>A</variation>
    <variation>E</variation>
    <location>
        <position position="1721"/>
    </location>
</feature>
<feature type="sequence conflict" description="In Ref. 3; BAD92390." evidence="15" ref="3">
    <original>E</original>
    <variation>EDDGE</variation>
    <location>
        <position position="644"/>
    </location>
</feature>
<feature type="sequence conflict" description="In Ref. 3; BAD92390." evidence="15" ref="3">
    <original>P</original>
    <variation>T</variation>
    <location>
        <position position="768"/>
    </location>
</feature>
<feature type="sequence conflict" description="In Ref. 4; AAF72885." evidence="15" ref="4">
    <original>EN</original>
    <variation>TR</variation>
    <location>
        <begin position="1426"/>
        <end position="1427"/>
    </location>
</feature>
<feature type="strand" evidence="16">
    <location>
        <begin position="1706"/>
        <end position="1708"/>
    </location>
</feature>
<feature type="helix" evidence="16">
    <location>
        <begin position="1714"/>
        <end position="1719"/>
    </location>
</feature>
<evidence type="ECO:0000250" key="1">
    <source>
        <dbReference type="UniProtKB" id="Q9JL04"/>
    </source>
</evidence>
<evidence type="ECO:0000255" key="2"/>
<evidence type="ECO:0000255" key="3">
    <source>
        <dbReference type="PROSITE-ProRule" id="PRU00774"/>
    </source>
</evidence>
<evidence type="ECO:0000256" key="4">
    <source>
        <dbReference type="SAM" id="MobiDB-lite"/>
    </source>
</evidence>
<evidence type="ECO:0000269" key="5">
    <source>
    </source>
</evidence>
<evidence type="ECO:0000269" key="6">
    <source>
    </source>
</evidence>
<evidence type="ECO:0000269" key="7">
    <source>
    </source>
</evidence>
<evidence type="ECO:0000269" key="8">
    <source>
    </source>
</evidence>
<evidence type="ECO:0000269" key="9">
    <source>
    </source>
</evidence>
<evidence type="ECO:0000269" key="10">
    <source>
    </source>
</evidence>
<evidence type="ECO:0000269" key="11">
    <source>
    </source>
</evidence>
<evidence type="ECO:0000269" key="12">
    <source>
    </source>
</evidence>
<evidence type="ECO:0000269" key="13">
    <source ref="3"/>
</evidence>
<evidence type="ECO:0000303" key="14">
    <source>
    </source>
</evidence>
<evidence type="ECO:0000305" key="15"/>
<evidence type="ECO:0007829" key="16">
    <source>
        <dbReference type="PDB" id="2YLE"/>
    </source>
</evidence>
<gene>
    <name type="primary">FMN2</name>
</gene>
<dbReference type="EMBL" id="AK298141">
    <property type="protein sequence ID" value="BAG60417.1"/>
    <property type="molecule type" value="mRNA"/>
</dbReference>
<dbReference type="EMBL" id="AL359918">
    <property type="status" value="NOT_ANNOTATED_CDS"/>
    <property type="molecule type" value="Genomic_DNA"/>
</dbReference>
<dbReference type="EMBL" id="AL513342">
    <property type="status" value="NOT_ANNOTATED_CDS"/>
    <property type="molecule type" value="Genomic_DNA"/>
</dbReference>
<dbReference type="EMBL" id="AL590490">
    <property type="status" value="NOT_ANNOTATED_CDS"/>
    <property type="molecule type" value="Genomic_DNA"/>
</dbReference>
<dbReference type="EMBL" id="AL646016">
    <property type="status" value="NOT_ANNOTATED_CDS"/>
    <property type="molecule type" value="Genomic_DNA"/>
</dbReference>
<dbReference type="EMBL" id="AB209153">
    <property type="protein sequence ID" value="BAD92390.1"/>
    <property type="molecule type" value="mRNA"/>
</dbReference>
<dbReference type="EMBL" id="AF218941">
    <property type="protein sequence ID" value="AAF72884.1"/>
    <property type="status" value="ALT_SEQ"/>
    <property type="molecule type" value="mRNA"/>
</dbReference>
<dbReference type="EMBL" id="AF218942">
    <property type="protein sequence ID" value="AAF72885.1"/>
    <property type="molecule type" value="mRNA"/>
</dbReference>
<dbReference type="CCDS" id="CCDS31069.2">
    <molecule id="Q9NZ56-1"/>
</dbReference>
<dbReference type="RefSeq" id="NP_001292353.1">
    <property type="nucleotide sequence ID" value="NM_001305424.1"/>
</dbReference>
<dbReference type="RefSeq" id="NP_064450.3">
    <molecule id="Q9NZ56-1"/>
    <property type="nucleotide sequence ID" value="NM_020066.4"/>
</dbReference>
<dbReference type="PDB" id="2YLE">
    <property type="method" value="X-ray"/>
    <property type="resolution" value="1.80 A"/>
    <property type="chains" value="B=1694-1722"/>
</dbReference>
<dbReference type="PDB" id="3R7G">
    <property type="method" value="X-ray"/>
    <property type="resolution" value="2.20 A"/>
    <property type="chains" value="B=1701-1722"/>
</dbReference>
<dbReference type="PDBsum" id="2YLE"/>
<dbReference type="PDBsum" id="3R7G"/>
<dbReference type="SMR" id="Q9NZ56"/>
<dbReference type="BioGRID" id="121199">
    <property type="interactions" value="64"/>
</dbReference>
<dbReference type="FunCoup" id="Q9NZ56">
    <property type="interactions" value="944"/>
</dbReference>
<dbReference type="IntAct" id="Q9NZ56">
    <property type="interactions" value="30"/>
</dbReference>
<dbReference type="MINT" id="Q9NZ56"/>
<dbReference type="STRING" id="9606.ENSP00000318884"/>
<dbReference type="GlyGen" id="Q9NZ56">
    <property type="glycosylation" value="1 site, 1 O-linked glycan (1 site)"/>
</dbReference>
<dbReference type="iPTMnet" id="Q9NZ56"/>
<dbReference type="PhosphoSitePlus" id="Q9NZ56"/>
<dbReference type="SwissPalm" id="Q9NZ56"/>
<dbReference type="BioMuta" id="FMN2"/>
<dbReference type="DMDM" id="166215083"/>
<dbReference type="jPOST" id="Q9NZ56"/>
<dbReference type="MassIVE" id="Q9NZ56"/>
<dbReference type="PaxDb" id="9606-ENSP00000318884"/>
<dbReference type="PeptideAtlas" id="Q9NZ56"/>
<dbReference type="ProteomicsDB" id="4739"/>
<dbReference type="ProteomicsDB" id="83328">
    <molecule id="Q9NZ56-1"/>
</dbReference>
<dbReference type="Pumba" id="Q9NZ56"/>
<dbReference type="Antibodypedia" id="20819">
    <property type="antibodies" value="134 antibodies from 28 providers"/>
</dbReference>
<dbReference type="DNASU" id="56776"/>
<dbReference type="Ensembl" id="ENST00000319653.14">
    <molecule id="Q9NZ56-1"/>
    <property type="protein sequence ID" value="ENSP00000318884.9"/>
    <property type="gene ID" value="ENSG00000155816.21"/>
</dbReference>
<dbReference type="GeneID" id="56776"/>
<dbReference type="KEGG" id="hsa:56776"/>
<dbReference type="MANE-Select" id="ENST00000319653.14">
    <property type="protein sequence ID" value="ENSP00000318884.9"/>
    <property type="RefSeq nucleotide sequence ID" value="NM_020066.5"/>
    <property type="RefSeq protein sequence ID" value="NP_064450.3"/>
</dbReference>
<dbReference type="UCSC" id="uc010pyd.3">
    <molecule id="Q9NZ56-1"/>
    <property type="organism name" value="human"/>
</dbReference>
<dbReference type="AGR" id="HGNC:14074"/>
<dbReference type="CTD" id="56776"/>
<dbReference type="DisGeNET" id="56776"/>
<dbReference type="GeneCards" id="FMN2"/>
<dbReference type="HGNC" id="HGNC:14074">
    <property type="gene designation" value="FMN2"/>
</dbReference>
<dbReference type="HPA" id="ENSG00000155816">
    <property type="expression patterns" value="Tissue enhanced (brain, parathyroid gland, retina)"/>
</dbReference>
<dbReference type="MalaCards" id="FMN2"/>
<dbReference type="MIM" id="606373">
    <property type="type" value="gene"/>
</dbReference>
<dbReference type="MIM" id="616193">
    <property type="type" value="phenotype"/>
</dbReference>
<dbReference type="neXtProt" id="NX_Q9NZ56"/>
<dbReference type="OpenTargets" id="ENSG00000155816"/>
<dbReference type="Orphanet" id="88616">
    <property type="disease" value="Autosomal recessive non-syndromic intellectual disability"/>
</dbReference>
<dbReference type="PharmGKB" id="PA28185"/>
<dbReference type="VEuPathDB" id="HostDB:ENSG00000155816"/>
<dbReference type="eggNOG" id="KOG1922">
    <property type="taxonomic scope" value="Eukaryota"/>
</dbReference>
<dbReference type="GeneTree" id="ENSGT00940000161899"/>
<dbReference type="HOGENOM" id="CLU_002670_2_0_1"/>
<dbReference type="InParanoid" id="Q9NZ56"/>
<dbReference type="OMA" id="CNQNAQS"/>
<dbReference type="OrthoDB" id="427644at2759"/>
<dbReference type="PAN-GO" id="Q9NZ56">
    <property type="GO annotations" value="4 GO annotations based on evolutionary models"/>
</dbReference>
<dbReference type="PhylomeDB" id="Q9NZ56"/>
<dbReference type="TreeFam" id="TF326072"/>
<dbReference type="PathwayCommons" id="Q9NZ56"/>
<dbReference type="SignaLink" id="Q9NZ56"/>
<dbReference type="BioGRID-ORCS" id="56776">
    <property type="hits" value="13 hits in 1157 CRISPR screens"/>
</dbReference>
<dbReference type="CD-CODE" id="91857CE7">
    <property type="entry name" value="Nucleolus"/>
</dbReference>
<dbReference type="CD-CODE" id="FB4E32DD">
    <property type="entry name" value="Presynaptic clusters and postsynaptic densities"/>
</dbReference>
<dbReference type="ChiTaRS" id="FMN2">
    <property type="organism name" value="human"/>
</dbReference>
<dbReference type="GenomeRNAi" id="56776"/>
<dbReference type="Pharos" id="Q9NZ56">
    <property type="development level" value="Tbio"/>
</dbReference>
<dbReference type="PRO" id="PR:Q9NZ56"/>
<dbReference type="Proteomes" id="UP000005640">
    <property type="component" value="Chromosome 1"/>
</dbReference>
<dbReference type="RNAct" id="Q9NZ56">
    <property type="molecule type" value="protein"/>
</dbReference>
<dbReference type="Bgee" id="ENSG00000155816">
    <property type="expression patterns" value="Expressed in cortical plate and 128 other cell types or tissues"/>
</dbReference>
<dbReference type="ExpressionAtlas" id="Q9NZ56">
    <property type="expression patterns" value="baseline and differential"/>
</dbReference>
<dbReference type="GO" id="GO:0015629">
    <property type="term" value="C:actin cytoskeleton"/>
    <property type="evidence" value="ECO:0000314"/>
    <property type="project" value="HPA"/>
</dbReference>
<dbReference type="GO" id="GO:0005938">
    <property type="term" value="C:cell cortex"/>
    <property type="evidence" value="ECO:0000250"/>
    <property type="project" value="UniProtKB"/>
</dbReference>
<dbReference type="GO" id="GO:0030659">
    <property type="term" value="C:cytoplasmic vesicle membrane"/>
    <property type="evidence" value="ECO:0000250"/>
    <property type="project" value="UniProtKB"/>
</dbReference>
<dbReference type="GO" id="GO:0005829">
    <property type="term" value="C:cytosol"/>
    <property type="evidence" value="ECO:0000314"/>
    <property type="project" value="UniProtKB"/>
</dbReference>
<dbReference type="GO" id="GO:0005783">
    <property type="term" value="C:endoplasmic reticulum"/>
    <property type="evidence" value="ECO:0000250"/>
    <property type="project" value="UniProtKB"/>
</dbReference>
<dbReference type="GO" id="GO:0005789">
    <property type="term" value="C:endoplasmic reticulum membrane"/>
    <property type="evidence" value="ECO:0000318"/>
    <property type="project" value="GO_Central"/>
</dbReference>
<dbReference type="GO" id="GO:0005902">
    <property type="term" value="C:microvillus"/>
    <property type="evidence" value="ECO:0007669"/>
    <property type="project" value="Ensembl"/>
</dbReference>
<dbReference type="GO" id="GO:0005730">
    <property type="term" value="C:nucleolus"/>
    <property type="evidence" value="ECO:0000314"/>
    <property type="project" value="UniProtKB"/>
</dbReference>
<dbReference type="GO" id="GO:0005634">
    <property type="term" value="C:nucleus"/>
    <property type="evidence" value="ECO:0000314"/>
    <property type="project" value="UniProtKB"/>
</dbReference>
<dbReference type="GO" id="GO:0048471">
    <property type="term" value="C:perinuclear region of cytoplasm"/>
    <property type="evidence" value="ECO:0007669"/>
    <property type="project" value="UniProtKB-SubCell"/>
</dbReference>
<dbReference type="GO" id="GO:0005886">
    <property type="term" value="C:plasma membrane"/>
    <property type="evidence" value="ECO:0000314"/>
    <property type="project" value="HPA"/>
</dbReference>
<dbReference type="GO" id="GO:0005819">
    <property type="term" value="C:spindle"/>
    <property type="evidence" value="ECO:0007669"/>
    <property type="project" value="Ensembl"/>
</dbReference>
<dbReference type="GO" id="GO:0003779">
    <property type="term" value="F:actin binding"/>
    <property type="evidence" value="ECO:0000314"/>
    <property type="project" value="UniProtKB"/>
</dbReference>
<dbReference type="GO" id="GO:0030036">
    <property type="term" value="P:actin cytoskeleton organization"/>
    <property type="evidence" value="ECO:0000315"/>
    <property type="project" value="BHF-UCL"/>
</dbReference>
<dbReference type="GO" id="GO:0016477">
    <property type="term" value="P:cell migration"/>
    <property type="evidence" value="ECO:0000315"/>
    <property type="project" value="BHF-UCL"/>
</dbReference>
<dbReference type="GO" id="GO:0071456">
    <property type="term" value="P:cellular response to hypoxia"/>
    <property type="evidence" value="ECO:0000315"/>
    <property type="project" value="UniProtKB"/>
</dbReference>
<dbReference type="GO" id="GO:0006974">
    <property type="term" value="P:DNA damage response"/>
    <property type="evidence" value="ECO:0000314"/>
    <property type="project" value="UniProtKB"/>
</dbReference>
<dbReference type="GO" id="GO:0051295">
    <property type="term" value="P:establishment of meiotic spindle localization"/>
    <property type="evidence" value="ECO:0000250"/>
    <property type="project" value="BHF-UCL"/>
</dbReference>
<dbReference type="GO" id="GO:0070649">
    <property type="term" value="P:formin-nucleated actin cable assembly"/>
    <property type="evidence" value="ECO:0000314"/>
    <property type="project" value="UniProtKB"/>
</dbReference>
<dbReference type="GO" id="GO:0051758">
    <property type="term" value="P:homologous chromosome movement towards spindle pole in meiosis I anaphase"/>
    <property type="evidence" value="ECO:0000250"/>
    <property type="project" value="BHF-UCL"/>
</dbReference>
<dbReference type="GO" id="GO:0035556">
    <property type="term" value="P:intracellular signal transduction"/>
    <property type="evidence" value="ECO:0007669"/>
    <property type="project" value="InterPro"/>
</dbReference>
<dbReference type="GO" id="GO:0046907">
    <property type="term" value="P:intracellular transport"/>
    <property type="evidence" value="ECO:0000250"/>
    <property type="project" value="UniProtKB"/>
</dbReference>
<dbReference type="GO" id="GO:0043066">
    <property type="term" value="P:negative regulation of apoptotic process"/>
    <property type="evidence" value="ECO:0000315"/>
    <property type="project" value="UniProtKB"/>
</dbReference>
<dbReference type="GO" id="GO:0042177">
    <property type="term" value="P:negative regulation of protein catabolic process"/>
    <property type="evidence" value="ECO:0000315"/>
    <property type="project" value="UniProtKB"/>
</dbReference>
<dbReference type="GO" id="GO:0048477">
    <property type="term" value="P:oogenesis"/>
    <property type="evidence" value="ECO:0000250"/>
    <property type="project" value="BHF-UCL"/>
</dbReference>
<dbReference type="GO" id="GO:0040038">
    <property type="term" value="P:polar body extrusion after meiotic divisions"/>
    <property type="evidence" value="ECO:0000250"/>
    <property type="project" value="BHF-UCL"/>
</dbReference>
<dbReference type="GO" id="GO:2000781">
    <property type="term" value="P:positive regulation of double-strand break repair"/>
    <property type="evidence" value="ECO:0000314"/>
    <property type="project" value="UniProtKB"/>
</dbReference>
<dbReference type="GO" id="GO:0015031">
    <property type="term" value="P:protein transport"/>
    <property type="evidence" value="ECO:0007669"/>
    <property type="project" value="UniProtKB-KW"/>
</dbReference>
<dbReference type="GO" id="GO:0016192">
    <property type="term" value="P:vesicle-mediated transport"/>
    <property type="evidence" value="ECO:0000250"/>
    <property type="project" value="UniProtKB"/>
</dbReference>
<dbReference type="FunFam" id="1.20.58.2220:FF:000007">
    <property type="entry name" value="formin-2"/>
    <property type="match status" value="1"/>
</dbReference>
<dbReference type="Gene3D" id="1.20.58.2220">
    <property type="entry name" value="Formin, FH2 domain"/>
    <property type="match status" value="1"/>
</dbReference>
<dbReference type="InterPro" id="IPR000591">
    <property type="entry name" value="DEP_dom"/>
</dbReference>
<dbReference type="InterPro" id="IPR015425">
    <property type="entry name" value="FH2_Formin"/>
</dbReference>
<dbReference type="InterPro" id="IPR042201">
    <property type="entry name" value="FH2_Formin_sf"/>
</dbReference>
<dbReference type="PANTHER" id="PTHR45920">
    <property type="entry name" value="FORMIN HOMOLOGY 2 DOMAIN CONTAINING, ISOFORM I"/>
    <property type="match status" value="1"/>
</dbReference>
<dbReference type="PANTHER" id="PTHR45920:SF7">
    <property type="entry name" value="FORMIN-G"/>
    <property type="match status" value="1"/>
</dbReference>
<dbReference type="Pfam" id="PF02181">
    <property type="entry name" value="FH2"/>
    <property type="match status" value="1"/>
</dbReference>
<dbReference type="PRINTS" id="PR01217">
    <property type="entry name" value="PRICHEXTENSN"/>
</dbReference>
<dbReference type="SMART" id="SM00498">
    <property type="entry name" value="FH2"/>
    <property type="match status" value="1"/>
</dbReference>
<dbReference type="SUPFAM" id="SSF101447">
    <property type="entry name" value="Formin homology 2 domain (FH2 domain)"/>
    <property type="match status" value="1"/>
</dbReference>
<dbReference type="PROSITE" id="PS51444">
    <property type="entry name" value="FH2"/>
    <property type="match status" value="1"/>
</dbReference>
<comment type="function">
    <text evidence="1 8 9 10 12">Actin-binding protein that is involved in actin cytoskeleton assembly and reorganization (PubMed:21730168, PubMed:22330775). Acts as an actin nucleation factor and promotes assembly of actin filaments together with SPIRE1 and SPIRE2 (PubMed:21730168, PubMed:22330775). Involved in intracellular vesicle transport along actin fibers, providing a novel link between actin cytoskeleton dynamics and intracellular transport (By similarity). Required for asymmetric spindle positioning, asymmetric oocyte division and polar body extrusion during female germ cell meiosis (By similarity). Plays a role in responses to DNA damage, cellular stress and hypoxia by protecting CDKN1A against degradation, and thereby plays a role in stress-induced cell cycle arrest (PubMed:23375502). Also acts in the nucleus: together with SPIRE1 and SPIRE2, promotes assembly of nuclear actin filaments in response to DNA damage in order to facilitate movement of chromatin and repair factors after DNA damage (PubMed:26287480). Protects cells against apoptosis by protecting CDKN1A against degradation (PubMed:23375502).</text>
</comment>
<comment type="subunit">
    <text evidence="6 7 8 10">Interacts with SPIRE1 (PubMed:21705804, PubMed:21730168). Binds actin (PubMed:20082305). Interacts with CDKN1A (PubMed:23375502).</text>
</comment>
<comment type="subcellular location">
    <subcellularLocation>
        <location evidence="6">Cytoplasm</location>
        <location evidence="6">Cytoskeleton</location>
    </subcellularLocation>
    <subcellularLocation>
        <location evidence="6">Cytoplasm</location>
        <location evidence="6">Cytosol</location>
    </subcellularLocation>
    <subcellularLocation>
        <location evidence="1">Cytoplasm</location>
        <location evidence="1">Perinuclear region</location>
    </subcellularLocation>
    <subcellularLocation>
        <location evidence="12">Nucleus</location>
    </subcellularLocation>
    <subcellularLocation>
        <location evidence="10">Nucleus</location>
        <location evidence="10">Nucleolus</location>
    </subcellularLocation>
    <subcellularLocation>
        <location evidence="1">Cell membrane</location>
        <topology evidence="1">Peripheral membrane protein</topology>
        <orientation evidence="1">Cytoplasmic side</orientation>
    </subcellularLocation>
    <subcellularLocation>
        <location evidence="1">Cytoplasmic vesicle membrane</location>
        <topology evidence="1">Peripheral membrane protein</topology>
        <orientation evidence="1">Cytoplasmic side</orientation>
    </subcellularLocation>
    <subcellularLocation>
        <location evidence="1">Cytoplasm</location>
        <location evidence="1">Cell cortex</location>
    </subcellularLocation>
    <text evidence="1 6 12">Colocalizes with the actin cytoskeleton (PubMed:20082305). Recruited to the membranes via its interaction with SPIRE1 (By similarity). Detected at the cleavage furrow during asymmetric oocyte division and polar body extrusion (By similarity). Accumulates in the nucleus following DNA damage (PubMed:26287480).</text>
</comment>
<comment type="alternative products">
    <event type="alternative splicing"/>
    <isoform>
        <id>Q9NZ56-1</id>
        <name>1</name>
        <sequence type="displayed"/>
    </isoform>
    <isoform>
        <id>Q9NZ56-2</id>
        <name>2</name>
        <sequence type="described" ref="VSP_056095"/>
    </isoform>
</comment>
<comment type="tissue specificity">
    <text evidence="5">Expressed almost exclusively in the developing and mature central nervous system.</text>
</comment>
<comment type="induction">
    <text evidence="10">Up-regulated in response to cellular stress, hypoxia and DNA damage via NF-kappa-B.</text>
</comment>
<comment type="disease" evidence="11">
    <disease id="DI-04311">
        <name>Intellectual developmental disorder, autosomal recessive 47</name>
        <acronym>MRT47</acronym>
        <description>A disorder characterized by significantly below average general intellectual functioning associated with impairments in adaptive behavior and manifested during the developmental period. MRT47 patients show delayed development, with cognition and speech more affected than motor skills.</description>
        <dbReference type="MIM" id="616193"/>
    </disease>
    <text>The disease is caused by variants affecting the gene represented in this entry.</text>
</comment>
<comment type="similarity">
    <text evidence="15">Belongs to the formin homology family. Cappuccino subfamily.</text>
</comment>
<comment type="sequence caution" evidence="15">
    <conflict type="miscellaneous discrepancy">
        <sequence resource="EMBL-CDS" id="AAF72884"/>
    </conflict>
    <text>Contaminating sequence. Sequence of unknown origin in the C-terminal part.</text>
</comment>
<organism>
    <name type="scientific">Homo sapiens</name>
    <name type="common">Human</name>
    <dbReference type="NCBI Taxonomy" id="9606"/>
    <lineage>
        <taxon>Eukaryota</taxon>
        <taxon>Metazoa</taxon>
        <taxon>Chordata</taxon>
        <taxon>Craniata</taxon>
        <taxon>Vertebrata</taxon>
        <taxon>Euteleostomi</taxon>
        <taxon>Mammalia</taxon>
        <taxon>Eutheria</taxon>
        <taxon>Euarchontoglires</taxon>
        <taxon>Primates</taxon>
        <taxon>Haplorrhini</taxon>
        <taxon>Catarrhini</taxon>
        <taxon>Hominidae</taxon>
        <taxon>Homo</taxon>
    </lineage>
</organism>
<accession>Q9NZ56</accession>
<accession>B0QZA7</accession>
<accession>B4DP05</accession>
<accession>Q59GF6</accession>
<accession>Q5VU37</accession>
<accession>Q9NZ55</accession>
<reference key="1">
    <citation type="journal article" date="2004" name="Nat. Genet.">
        <title>Complete sequencing and characterization of 21,243 full-length human cDNAs.</title>
        <authorList>
            <person name="Ota T."/>
            <person name="Suzuki Y."/>
            <person name="Nishikawa T."/>
            <person name="Otsuki T."/>
            <person name="Sugiyama T."/>
            <person name="Irie R."/>
            <person name="Wakamatsu A."/>
            <person name="Hayashi K."/>
            <person name="Sato H."/>
            <person name="Nagai K."/>
            <person name="Kimura K."/>
            <person name="Makita H."/>
            <person name="Sekine M."/>
            <person name="Obayashi M."/>
            <person name="Nishi T."/>
            <person name="Shibahara T."/>
            <person name="Tanaka T."/>
            <person name="Ishii S."/>
            <person name="Yamamoto J."/>
            <person name="Saito K."/>
            <person name="Kawai Y."/>
            <person name="Isono Y."/>
            <person name="Nakamura Y."/>
            <person name="Nagahari K."/>
            <person name="Murakami K."/>
            <person name="Yasuda T."/>
            <person name="Iwayanagi T."/>
            <person name="Wagatsuma M."/>
            <person name="Shiratori A."/>
            <person name="Sudo H."/>
            <person name="Hosoiri T."/>
            <person name="Kaku Y."/>
            <person name="Kodaira H."/>
            <person name="Kondo H."/>
            <person name="Sugawara M."/>
            <person name="Takahashi M."/>
            <person name="Kanda K."/>
            <person name="Yokoi T."/>
            <person name="Furuya T."/>
            <person name="Kikkawa E."/>
            <person name="Omura Y."/>
            <person name="Abe K."/>
            <person name="Kamihara K."/>
            <person name="Katsuta N."/>
            <person name="Sato K."/>
            <person name="Tanikawa M."/>
            <person name="Yamazaki M."/>
            <person name="Ninomiya K."/>
            <person name="Ishibashi T."/>
            <person name="Yamashita H."/>
            <person name="Murakawa K."/>
            <person name="Fujimori K."/>
            <person name="Tanai H."/>
            <person name="Kimata M."/>
            <person name="Watanabe M."/>
            <person name="Hiraoka S."/>
            <person name="Chiba Y."/>
            <person name="Ishida S."/>
            <person name="Ono Y."/>
            <person name="Takiguchi S."/>
            <person name="Watanabe S."/>
            <person name="Yosida M."/>
            <person name="Hotuta T."/>
            <person name="Kusano J."/>
            <person name="Kanehori K."/>
            <person name="Takahashi-Fujii A."/>
            <person name="Hara H."/>
            <person name="Tanase T.-O."/>
            <person name="Nomura Y."/>
            <person name="Togiya S."/>
            <person name="Komai F."/>
            <person name="Hara R."/>
            <person name="Takeuchi K."/>
            <person name="Arita M."/>
            <person name="Imose N."/>
            <person name="Musashino K."/>
            <person name="Yuuki H."/>
            <person name="Oshima A."/>
            <person name="Sasaki N."/>
            <person name="Aotsuka S."/>
            <person name="Yoshikawa Y."/>
            <person name="Matsunawa H."/>
            <person name="Ichihara T."/>
            <person name="Shiohata N."/>
            <person name="Sano S."/>
            <person name="Moriya S."/>
            <person name="Momiyama H."/>
            <person name="Satoh N."/>
            <person name="Takami S."/>
            <person name="Terashima Y."/>
            <person name="Suzuki O."/>
            <person name="Nakagawa S."/>
            <person name="Senoh A."/>
            <person name="Mizoguchi H."/>
            <person name="Goto Y."/>
            <person name="Shimizu F."/>
            <person name="Wakebe H."/>
            <person name="Hishigaki H."/>
            <person name="Watanabe T."/>
            <person name="Sugiyama A."/>
            <person name="Takemoto M."/>
            <person name="Kawakami B."/>
            <person name="Yamazaki M."/>
            <person name="Watanabe K."/>
            <person name="Kumagai A."/>
            <person name="Itakura S."/>
            <person name="Fukuzumi Y."/>
            <person name="Fujimori Y."/>
            <person name="Komiyama M."/>
            <person name="Tashiro H."/>
            <person name="Tanigami A."/>
            <person name="Fujiwara T."/>
            <person name="Ono T."/>
            <person name="Yamada K."/>
            <person name="Fujii Y."/>
            <person name="Ozaki K."/>
            <person name="Hirao M."/>
            <person name="Ohmori Y."/>
            <person name="Kawabata A."/>
            <person name="Hikiji T."/>
            <person name="Kobatake N."/>
            <person name="Inagaki H."/>
            <person name="Ikema Y."/>
            <person name="Okamoto S."/>
            <person name="Okitani R."/>
            <person name="Kawakami T."/>
            <person name="Noguchi S."/>
            <person name="Itoh T."/>
            <person name="Shigeta K."/>
            <person name="Senba T."/>
            <person name="Matsumura K."/>
            <person name="Nakajima Y."/>
            <person name="Mizuno T."/>
            <person name="Morinaga M."/>
            <person name="Sasaki M."/>
            <person name="Togashi T."/>
            <person name="Oyama M."/>
            <person name="Hata H."/>
            <person name="Watanabe M."/>
            <person name="Komatsu T."/>
            <person name="Mizushima-Sugano J."/>
            <person name="Satoh T."/>
            <person name="Shirai Y."/>
            <person name="Takahashi Y."/>
            <person name="Nakagawa K."/>
            <person name="Okumura K."/>
            <person name="Nagase T."/>
            <person name="Nomura N."/>
            <person name="Kikuchi H."/>
            <person name="Masuho Y."/>
            <person name="Yamashita R."/>
            <person name="Nakai K."/>
            <person name="Yada T."/>
            <person name="Nakamura Y."/>
            <person name="Ohara O."/>
            <person name="Isogai T."/>
            <person name="Sugano S."/>
        </authorList>
    </citation>
    <scope>NUCLEOTIDE SEQUENCE [LARGE SCALE MRNA] (ISOFORM 2)</scope>
</reference>
<reference key="2">
    <citation type="journal article" date="2006" name="Nature">
        <title>The DNA sequence and biological annotation of human chromosome 1.</title>
        <authorList>
            <person name="Gregory S.G."/>
            <person name="Barlow K.F."/>
            <person name="McLay K.E."/>
            <person name="Kaul R."/>
            <person name="Swarbreck D."/>
            <person name="Dunham A."/>
            <person name="Scott C.E."/>
            <person name="Howe K.L."/>
            <person name="Woodfine K."/>
            <person name="Spencer C.C.A."/>
            <person name="Jones M.C."/>
            <person name="Gillson C."/>
            <person name="Searle S."/>
            <person name="Zhou Y."/>
            <person name="Kokocinski F."/>
            <person name="McDonald L."/>
            <person name="Evans R."/>
            <person name="Phillips K."/>
            <person name="Atkinson A."/>
            <person name="Cooper R."/>
            <person name="Jones C."/>
            <person name="Hall R.E."/>
            <person name="Andrews T.D."/>
            <person name="Lloyd C."/>
            <person name="Ainscough R."/>
            <person name="Almeida J.P."/>
            <person name="Ambrose K.D."/>
            <person name="Anderson F."/>
            <person name="Andrew R.W."/>
            <person name="Ashwell R.I.S."/>
            <person name="Aubin K."/>
            <person name="Babbage A.K."/>
            <person name="Bagguley C.L."/>
            <person name="Bailey J."/>
            <person name="Beasley H."/>
            <person name="Bethel G."/>
            <person name="Bird C.P."/>
            <person name="Bray-Allen S."/>
            <person name="Brown J.Y."/>
            <person name="Brown A.J."/>
            <person name="Buckley D."/>
            <person name="Burton J."/>
            <person name="Bye J."/>
            <person name="Carder C."/>
            <person name="Chapman J.C."/>
            <person name="Clark S.Y."/>
            <person name="Clarke G."/>
            <person name="Clee C."/>
            <person name="Cobley V."/>
            <person name="Collier R.E."/>
            <person name="Corby N."/>
            <person name="Coville G.J."/>
            <person name="Davies J."/>
            <person name="Deadman R."/>
            <person name="Dunn M."/>
            <person name="Earthrowl M."/>
            <person name="Ellington A.G."/>
            <person name="Errington H."/>
            <person name="Frankish A."/>
            <person name="Frankland J."/>
            <person name="French L."/>
            <person name="Garner P."/>
            <person name="Garnett J."/>
            <person name="Gay L."/>
            <person name="Ghori M.R.J."/>
            <person name="Gibson R."/>
            <person name="Gilby L.M."/>
            <person name="Gillett W."/>
            <person name="Glithero R.J."/>
            <person name="Grafham D.V."/>
            <person name="Griffiths C."/>
            <person name="Griffiths-Jones S."/>
            <person name="Grocock R."/>
            <person name="Hammond S."/>
            <person name="Harrison E.S.I."/>
            <person name="Hart E."/>
            <person name="Haugen E."/>
            <person name="Heath P.D."/>
            <person name="Holmes S."/>
            <person name="Holt K."/>
            <person name="Howden P.J."/>
            <person name="Hunt A.R."/>
            <person name="Hunt S.E."/>
            <person name="Hunter G."/>
            <person name="Isherwood J."/>
            <person name="James R."/>
            <person name="Johnson C."/>
            <person name="Johnson D."/>
            <person name="Joy A."/>
            <person name="Kay M."/>
            <person name="Kershaw J.K."/>
            <person name="Kibukawa M."/>
            <person name="Kimberley A.M."/>
            <person name="King A."/>
            <person name="Knights A.J."/>
            <person name="Lad H."/>
            <person name="Laird G."/>
            <person name="Lawlor S."/>
            <person name="Leongamornlert D.A."/>
            <person name="Lloyd D.M."/>
            <person name="Loveland J."/>
            <person name="Lovell J."/>
            <person name="Lush M.J."/>
            <person name="Lyne R."/>
            <person name="Martin S."/>
            <person name="Mashreghi-Mohammadi M."/>
            <person name="Matthews L."/>
            <person name="Matthews N.S.W."/>
            <person name="McLaren S."/>
            <person name="Milne S."/>
            <person name="Mistry S."/>
            <person name="Moore M.J.F."/>
            <person name="Nickerson T."/>
            <person name="O'Dell C.N."/>
            <person name="Oliver K."/>
            <person name="Palmeiri A."/>
            <person name="Palmer S.A."/>
            <person name="Parker A."/>
            <person name="Patel D."/>
            <person name="Pearce A.V."/>
            <person name="Peck A.I."/>
            <person name="Pelan S."/>
            <person name="Phelps K."/>
            <person name="Phillimore B.J."/>
            <person name="Plumb R."/>
            <person name="Rajan J."/>
            <person name="Raymond C."/>
            <person name="Rouse G."/>
            <person name="Saenphimmachak C."/>
            <person name="Sehra H.K."/>
            <person name="Sheridan E."/>
            <person name="Shownkeen R."/>
            <person name="Sims S."/>
            <person name="Skuce C.D."/>
            <person name="Smith M."/>
            <person name="Steward C."/>
            <person name="Subramanian S."/>
            <person name="Sycamore N."/>
            <person name="Tracey A."/>
            <person name="Tromans A."/>
            <person name="Van Helmond Z."/>
            <person name="Wall M."/>
            <person name="Wallis J.M."/>
            <person name="White S."/>
            <person name="Whitehead S.L."/>
            <person name="Wilkinson J.E."/>
            <person name="Willey D.L."/>
            <person name="Williams H."/>
            <person name="Wilming L."/>
            <person name="Wray P.W."/>
            <person name="Wu Z."/>
            <person name="Coulson A."/>
            <person name="Vaudin M."/>
            <person name="Sulston J.E."/>
            <person name="Durbin R.M."/>
            <person name="Hubbard T."/>
            <person name="Wooster R."/>
            <person name="Dunham I."/>
            <person name="Carter N.P."/>
            <person name="McVean G."/>
            <person name="Ross M.T."/>
            <person name="Harrow J."/>
            <person name="Olson M.V."/>
            <person name="Beck S."/>
            <person name="Rogers J."/>
            <person name="Bentley D.R."/>
        </authorList>
    </citation>
    <scope>NUCLEOTIDE SEQUENCE [LARGE SCALE GENOMIC DNA]</scope>
</reference>
<reference key="3">
    <citation type="submission" date="2005-03" db="EMBL/GenBank/DDBJ databases">
        <authorList>
            <person name="Totoki Y."/>
            <person name="Toyoda A."/>
            <person name="Takeda T."/>
            <person name="Sakaki Y."/>
            <person name="Tanaka A."/>
            <person name="Yokoyama S."/>
            <person name="Ohara O."/>
            <person name="Nagase T."/>
            <person name="Kikuno R.F."/>
        </authorList>
    </citation>
    <scope>NUCLEOTIDE SEQUENCE [LARGE SCALE MRNA] OF 395-1722 (ISOFORM 1)</scope>
    <scope>VARIANTS GLY-1148 AND HIS-1468</scope>
    <source>
        <tissue>Brain</tissue>
    </source>
</reference>
<reference key="4">
    <citation type="journal article" date="2000" name="Mech. Dev.">
        <title>Formin-2, a novel formin homology protein of the cappuccino subfamily, is highly expressed in the developing and adult central nervous system.</title>
        <authorList>
            <person name="Leader B."/>
            <person name="Leder P."/>
        </authorList>
    </citation>
    <scope>NUCLEOTIDE SEQUENCE [MRNA] OF 396-727 AND 1426-1722 (ISOFORM 1)</scope>
    <scope>TISSUE SPECIFICITY</scope>
    <source>
        <tissue>Brain</tissue>
    </source>
</reference>
<reference key="5">
    <citation type="journal article" date="2010" name="J. Cell. Physiol.">
        <title>Effects of genistein on beta-catenin signaling and subcellular distribution of actin-binding proteins in human umbilical CD105-positive stromal cells.</title>
        <authorList>
            <person name="Shieh D.B."/>
            <person name="Li R.Y."/>
            <person name="Liao J.M."/>
            <person name="Chen G.D."/>
            <person name="Liou Y.M."/>
        </authorList>
    </citation>
    <scope>INTERACTION WITH ACTIN</scope>
    <scope>SUBCELLULAR LOCATION</scope>
</reference>
<reference key="6">
    <citation type="journal article" date="2012" name="Biochim. Biophys. Acta">
        <title>Differential role of actin-binding proteins in controlling the adipogenic differentiation of human CD105-positive Wharton's Jelly cells.</title>
        <authorList>
            <person name="Peng K.W."/>
            <person name="Liou Y.M."/>
        </authorList>
    </citation>
    <scope>FUNCTION</scope>
</reference>
<reference key="7">
    <citation type="journal article" date="2013" name="Mol. Cell">
        <title>Identification and functional characterization of FMN2, a regulator of the cyclin-dependent kinase inhibitor p21.</title>
        <authorList>
            <person name="Yamada K."/>
            <person name="Ono M."/>
            <person name="Perkins N.D."/>
            <person name="Rocha S."/>
            <person name="Lamond A.I."/>
        </authorList>
    </citation>
    <scope>FUNCTION</scope>
    <scope>INTERACTION WITH CDKN1A</scope>
    <scope>SUBCELLULAR LOCATION</scope>
    <scope>INDUCTION</scope>
    <scope>IDENTIFICATION BY MASS SPECTROMETRY</scope>
</reference>
<reference key="8">
    <citation type="journal article" date="2014" name="Am. J. Hum. Genet.">
        <title>Biallelic truncating mutations in FMN2, encoding the actin-regulatory protein Formin 2, cause nonsyndromic autosomal-recessive intellectual disability.</title>
        <authorList>
            <person name="Law R."/>
            <person name="Dixon-Salazar T."/>
            <person name="Jerber J."/>
            <person name="Cai N."/>
            <person name="Abbasi A.A."/>
            <person name="Zaki M.S."/>
            <person name="Mittal K."/>
            <person name="Gabriel S.B."/>
            <person name="Rafiq M.A."/>
            <person name="Khan V."/>
            <person name="Nguyen M."/>
            <person name="Ali G."/>
            <person name="Copeland B."/>
            <person name="Scott E."/>
            <person name="Vasli N."/>
            <person name="Mikhailov A."/>
            <person name="Khan M.N."/>
            <person name="Andrade D.M."/>
            <person name="Ayaz M."/>
            <person name="Ansar M."/>
            <person name="Ayub M."/>
            <person name="Vincent J.B."/>
            <person name="Gleeson J.G."/>
        </authorList>
    </citation>
    <scope>INVOLVEMENT IN MRT47</scope>
</reference>
<reference key="9">
    <citation type="journal article" date="2015" name="Elife">
        <title>DNA damage induces nuclear actin filament assembly by Formin -2 and Spire-1/2 that promotes efficient DNA repair.</title>
        <authorList>
            <person name="Belin B.J."/>
            <person name="Lee T."/>
            <person name="Mullins R.D."/>
        </authorList>
    </citation>
    <scope>FUNCTION</scope>
    <scope>SUBCELLULAR LOCATION</scope>
    <scope>MUTAGENESIS OF 444-LYS--ARG-446</scope>
</reference>
<reference key="10">
    <citation type="journal article" date="2011" name="J. Biol. Chem.">
        <title>Molecular basis of actin nucleation factor cooperativity: crystal structure of the Spir-1 kinase non-catalytic C-lobe domain (KIND)*formin-2 formin SPIR interaction motif (FSI) complex.</title>
        <authorList>
            <person name="Zeth K."/>
            <person name="Pechlivanis M."/>
            <person name="Samol A."/>
            <person name="Pleiser S."/>
            <person name="Vonrhein C."/>
            <person name="Kerkhoff E."/>
        </authorList>
    </citation>
    <scope>X-RAY CRYSTALLOGRAPHY (1.8 ANGSTROMS) OF 1694-1722 IN COMPLEX WITH SPIRE1</scope>
    <scope>INTERACTION WITH SPIRE1</scope>
</reference>
<reference key="11">
    <citation type="journal article" date="2011" name="Proc. Natl. Acad. Sci. U.S.A.">
        <title>Structure and function of the interacting domains of Spire and Fmn-family formins.</title>
        <authorList>
            <person name="Vizcarra C.L."/>
            <person name="Kreutz B."/>
            <person name="Rodal A.A."/>
            <person name="Toms A.V."/>
            <person name="Lu J."/>
            <person name="Zheng W."/>
            <person name="Quinlan M.E."/>
            <person name="Eck M.J."/>
        </authorList>
    </citation>
    <scope>X-RAY CRYSTALLOGRAPHY (2.2 ANGSTROMS) OF 1701-1722 IN COMPLEX WITH SPIRE1</scope>
    <scope>FUNCTION</scope>
    <scope>INTERACTION WITH SPIRE1</scope>
    <scope>MUTAGENESIS OF LYS-1715; LYS-1717 AND LYS-1721</scope>
</reference>
<proteinExistence type="evidence at protein level"/>
<name>FMN2_HUMAN</name>
<keyword id="KW-0002">3D-structure</keyword>
<keyword id="KW-0009">Actin-binding</keyword>
<keyword id="KW-0025">Alternative splicing</keyword>
<keyword id="KW-1003">Cell membrane</keyword>
<keyword id="KW-0175">Coiled coil</keyword>
<keyword id="KW-0963">Cytoplasm</keyword>
<keyword id="KW-0968">Cytoplasmic vesicle</keyword>
<keyword id="KW-0206">Cytoskeleton</keyword>
<keyword id="KW-0217">Developmental protein</keyword>
<keyword id="KW-0227">DNA damage</keyword>
<keyword id="KW-0991">Intellectual disability</keyword>
<keyword id="KW-0472">Membrane</keyword>
<keyword id="KW-0539">Nucleus</keyword>
<keyword id="KW-0597">Phosphoprotein</keyword>
<keyword id="KW-0653">Protein transport</keyword>
<keyword id="KW-1267">Proteomics identification</keyword>
<keyword id="KW-1185">Reference proteome</keyword>
<keyword id="KW-0346">Stress response</keyword>
<keyword id="KW-0813">Transport</keyword>
<sequence length="1722" mass="180106">MGNQDGKLKRSAGDALHEGGGGAEDALGPRDVEATKKGSGGKKALGKHGKGGGGGGGGGESGKKKSKSDSRASVFSNLRIRKNLSKGKGAGGSREDVLDSQALQTGELDSAHSLLTKTPDLSLSADEAGLSDTECADPFEVTGPGGPGPAEARVGGRPIAEDVETAAGAQDGQRTSSGSDTDIYSFHSATEQEDLLSDIQQAIRLQQQQQQQLQLQLQQQQQQQQLQGAEEPAAPPTAVSPQPGAFLGLDRFLLGPSGGAGEAPGSPDTEQALSALSDLPESLAAEPREPQQPPSPGGLPVSEAPSLPAAQPAAKDSPSSTAFPFPEAGPGEEAAGAPVRGAGDTDEEGEEDAFEDAPRGSPGEEWAPEVGEDAPQRLGEEPEEEAQGPDAPAAASLPGSPAPSQRCFKPYPLITPCYIKTTTRQLSSPNHSPSQSPNQSPRIKRRPEPSLSRGSRTALASVAAPAKKHRADGGLAAGLSRSADWTEELGARTPRVGGSAHLLERGVASDSGGGVSPALAAKASGAPAAADGFQNVFTGRTLLEKLFSQQENGPPEEAEKFCSRIIAMGLLLPFSDCFREPCNQNAQTNAASFDQDQLYTWAAVSQPTHSLDYSEGQFPRRVPSMGPPSKPPDEEHRLEDAETESQSAVSETPQKRSDAVQKEVVDMKSEGQATVIQQLEQTIEDLRTKIAELERQYPALDTEVASGHQGLENGVTASGDVCLEALRLEEKEVRHHRILEAKSIQTSPTEEGGVLTLPPVDGLPGRPPCPPGAESGPQTKFCSEISLIVSPRRISVQLDSHQPTQSISQPPPPPSLLWSAGQGQPGSQPPHSISTEFQTSHEHSVSSAFKNSCNIPSPPPLPCTESSSSMPGLGMVPPPPPPLPGMTVPTLPSTAIPQPPPLQGTEMLPPPPPPLPGAGIPPPPPLPGAGILPLPPLPGAGIPPPPPLPGAAIPPPPPLPGAGIPLPPPLPGAGIPPPPPLPGAGIPPPPPLPGAGIPPPPPLPGAGIPPPPPLPGAGIPPPPPLPGAGIPPPPPLPGAGIPPPPPLPGAGIPPPPPLPGAGIPPPPPLPGAGIPPPPPLPGAGIPPPPPLPGAGIPPPPPLPGVGIPPPPPLPGAGIPPPPPLPGAGIPPPPPLPGAGIPPPPPLPRVGIPPPPPLPGAGIPPPPPLPGAGIPPPPPLPGVGIPPPPPLPGVGIPPPPPLPGAGIPPPPPLPGMGIPPAPAPPLPPPGTGIPPPPLLPVSGPPLLPQVGSSTLPTPQVCGFLPPPLPSGLFGLGMNQDKGSRKQPIEPCRPMKPLYWTRIQLHSKRDSSTSLIWEKIEEPSIDCHEFEELFSKTAVKERKKPISDTISKTKAKQVVKLLSNKRSQAVGILMSSLHLDMKDIQHAVVNLDNSVVDLETLQALYENRAQSDELEKIEKHGRSSKDKENAKSLDKPEQFLYELSLIPNFSERVFCILFQSTFSESICSIRRKLELLQKLCETLKNGPGVMQVLGLVLAFGNYMNGGNKTRGQADGFGLDILPKLKDVKSSDNSRSLLSYIVSYYLRNFDEDAGKEQCLFPLPEPQDLFQASQMKFEDFQKDLRKLKKDLKACEVEAGKVYQVSSKEHMQPFKENMEQFIIQAKIDQEAEENSLTETHKCFLETTAYFFMKPKLGEKEVSPNAFFSIWHEFSSDFKDFWKKENKLLLQERVKEAEEVCRQKKGKSLYKIKPRHDSGIKAKISMKT</sequence>